<name>PUR7_ERWT9</name>
<evidence type="ECO:0000255" key="1">
    <source>
        <dbReference type="HAMAP-Rule" id="MF_00137"/>
    </source>
</evidence>
<accession>B2VE61</accession>
<protein>
    <recommendedName>
        <fullName evidence="1">Phosphoribosylaminoimidazole-succinocarboxamide synthase</fullName>
        <ecNumber evidence="1">6.3.2.6</ecNumber>
    </recommendedName>
    <alternativeName>
        <fullName evidence="1">SAICAR synthetase</fullName>
    </alternativeName>
</protein>
<sequence length="237" mass="27001">MQKKAELYRGKAKTVYSTENPDLLVLEFRNDTSALDGERIEQFDRKGMINNKFNHFIMTKLQEAGIPTQMEALLSDNEALVKNLDMVPVECVIRNRAAGSLVKRLGVEEGMILNPPLFDLFLKDDAKHDPMVNESYCETFGWVSQTHLARMRELTYRANEVLSKLFADAGLILVDFKLEFGLFKGEVVLGDEFSPDGARLWDKDTLNKMDKDRYRQSLGGLIEAYEEVANRLGVKLD</sequence>
<dbReference type="EC" id="6.3.2.6" evidence="1"/>
<dbReference type="EMBL" id="CU468135">
    <property type="protein sequence ID" value="CAO96114.1"/>
    <property type="molecule type" value="Genomic_DNA"/>
</dbReference>
<dbReference type="RefSeq" id="WP_012440814.1">
    <property type="nucleotide sequence ID" value="NC_010694.1"/>
</dbReference>
<dbReference type="SMR" id="B2VE61"/>
<dbReference type="STRING" id="465817.ETA_10680"/>
<dbReference type="KEGG" id="eta:ETA_10680"/>
<dbReference type="eggNOG" id="COG0152">
    <property type="taxonomic scope" value="Bacteria"/>
</dbReference>
<dbReference type="HOGENOM" id="CLU_061495_2_0_6"/>
<dbReference type="OrthoDB" id="9801549at2"/>
<dbReference type="UniPathway" id="UPA00074">
    <property type="reaction ID" value="UER00131"/>
</dbReference>
<dbReference type="Proteomes" id="UP000001726">
    <property type="component" value="Chromosome"/>
</dbReference>
<dbReference type="GO" id="GO:0005829">
    <property type="term" value="C:cytosol"/>
    <property type="evidence" value="ECO:0007669"/>
    <property type="project" value="TreeGrafter"/>
</dbReference>
<dbReference type="GO" id="GO:0005524">
    <property type="term" value="F:ATP binding"/>
    <property type="evidence" value="ECO:0007669"/>
    <property type="project" value="UniProtKB-KW"/>
</dbReference>
<dbReference type="GO" id="GO:0004639">
    <property type="term" value="F:phosphoribosylaminoimidazolesuccinocarboxamide synthase activity"/>
    <property type="evidence" value="ECO:0007669"/>
    <property type="project" value="UniProtKB-UniRule"/>
</dbReference>
<dbReference type="GO" id="GO:0006189">
    <property type="term" value="P:'de novo' IMP biosynthetic process"/>
    <property type="evidence" value="ECO:0007669"/>
    <property type="project" value="UniProtKB-UniRule"/>
</dbReference>
<dbReference type="GO" id="GO:0009236">
    <property type="term" value="P:cobalamin biosynthetic process"/>
    <property type="evidence" value="ECO:0007669"/>
    <property type="project" value="InterPro"/>
</dbReference>
<dbReference type="CDD" id="cd01415">
    <property type="entry name" value="SAICAR_synt_PurC"/>
    <property type="match status" value="1"/>
</dbReference>
<dbReference type="FunFam" id="3.30.200.20:FF:000086">
    <property type="entry name" value="Phosphoribosylaminoimidazole-succinocarboxamide synthase"/>
    <property type="match status" value="1"/>
</dbReference>
<dbReference type="FunFam" id="3.30.470.20:FF:000006">
    <property type="entry name" value="Phosphoribosylaminoimidazole-succinocarboxamide synthase"/>
    <property type="match status" value="1"/>
</dbReference>
<dbReference type="Gene3D" id="3.30.470.20">
    <property type="entry name" value="ATP-grasp fold, B domain"/>
    <property type="match status" value="1"/>
</dbReference>
<dbReference type="Gene3D" id="3.30.200.20">
    <property type="entry name" value="Phosphorylase Kinase, domain 1"/>
    <property type="match status" value="1"/>
</dbReference>
<dbReference type="HAMAP" id="MF_00137">
    <property type="entry name" value="SAICAR_synth"/>
    <property type="match status" value="1"/>
</dbReference>
<dbReference type="InterPro" id="IPR028923">
    <property type="entry name" value="SAICAR_synt/ADE2_N"/>
</dbReference>
<dbReference type="InterPro" id="IPR033934">
    <property type="entry name" value="SAICAR_synt_PurC"/>
</dbReference>
<dbReference type="InterPro" id="IPR001636">
    <property type="entry name" value="SAICAR_synth"/>
</dbReference>
<dbReference type="InterPro" id="IPR050089">
    <property type="entry name" value="SAICAR_synthetase"/>
</dbReference>
<dbReference type="InterPro" id="IPR018236">
    <property type="entry name" value="SAICAR_synthetase_CS"/>
</dbReference>
<dbReference type="NCBIfam" id="TIGR00081">
    <property type="entry name" value="purC"/>
    <property type="match status" value="1"/>
</dbReference>
<dbReference type="PANTHER" id="PTHR43599">
    <property type="entry name" value="MULTIFUNCTIONAL PROTEIN ADE2"/>
    <property type="match status" value="1"/>
</dbReference>
<dbReference type="PANTHER" id="PTHR43599:SF3">
    <property type="entry name" value="SI:DKEY-6E2.2"/>
    <property type="match status" value="1"/>
</dbReference>
<dbReference type="Pfam" id="PF01259">
    <property type="entry name" value="SAICAR_synt"/>
    <property type="match status" value="1"/>
</dbReference>
<dbReference type="SUPFAM" id="SSF56104">
    <property type="entry name" value="SAICAR synthase-like"/>
    <property type="match status" value="1"/>
</dbReference>
<dbReference type="PROSITE" id="PS01057">
    <property type="entry name" value="SAICAR_SYNTHETASE_1"/>
    <property type="match status" value="1"/>
</dbReference>
<dbReference type="PROSITE" id="PS01058">
    <property type="entry name" value="SAICAR_SYNTHETASE_2"/>
    <property type="match status" value="1"/>
</dbReference>
<comment type="catalytic activity">
    <reaction evidence="1">
        <text>5-amino-1-(5-phospho-D-ribosyl)imidazole-4-carboxylate + L-aspartate + ATP = (2S)-2-[5-amino-1-(5-phospho-beta-D-ribosyl)imidazole-4-carboxamido]succinate + ADP + phosphate + 2 H(+)</text>
        <dbReference type="Rhea" id="RHEA:22628"/>
        <dbReference type="ChEBI" id="CHEBI:15378"/>
        <dbReference type="ChEBI" id="CHEBI:29991"/>
        <dbReference type="ChEBI" id="CHEBI:30616"/>
        <dbReference type="ChEBI" id="CHEBI:43474"/>
        <dbReference type="ChEBI" id="CHEBI:58443"/>
        <dbReference type="ChEBI" id="CHEBI:77657"/>
        <dbReference type="ChEBI" id="CHEBI:456216"/>
        <dbReference type="EC" id="6.3.2.6"/>
    </reaction>
</comment>
<comment type="pathway">
    <text evidence="1">Purine metabolism; IMP biosynthesis via de novo pathway; 5-amino-1-(5-phospho-D-ribosyl)imidazole-4-carboxamide from 5-amino-1-(5-phospho-D-ribosyl)imidazole-4-carboxylate: step 1/2.</text>
</comment>
<comment type="similarity">
    <text evidence="1">Belongs to the SAICAR synthetase family.</text>
</comment>
<gene>
    <name evidence="1" type="primary">purC</name>
    <name type="ordered locus">ETA_10680</name>
</gene>
<proteinExistence type="inferred from homology"/>
<organism>
    <name type="scientific">Erwinia tasmaniensis (strain DSM 17950 / CFBP 7177 / CIP 109463 / NCPPB 4357 / Et1/99)</name>
    <dbReference type="NCBI Taxonomy" id="465817"/>
    <lineage>
        <taxon>Bacteria</taxon>
        <taxon>Pseudomonadati</taxon>
        <taxon>Pseudomonadota</taxon>
        <taxon>Gammaproteobacteria</taxon>
        <taxon>Enterobacterales</taxon>
        <taxon>Erwiniaceae</taxon>
        <taxon>Erwinia</taxon>
    </lineage>
</organism>
<reference key="1">
    <citation type="journal article" date="2008" name="Environ. Microbiol.">
        <title>The genome of Erwinia tasmaniensis strain Et1/99, a non-pathogenic bacterium in the genus Erwinia.</title>
        <authorList>
            <person name="Kube M."/>
            <person name="Migdoll A.M."/>
            <person name="Mueller I."/>
            <person name="Kuhl H."/>
            <person name="Beck A."/>
            <person name="Reinhardt R."/>
            <person name="Geider K."/>
        </authorList>
    </citation>
    <scope>NUCLEOTIDE SEQUENCE [LARGE SCALE GENOMIC DNA]</scope>
    <source>
        <strain>DSM 17950 / CFBP 7177 / CIP 109463 / NCPPB 4357 / Et1/99</strain>
    </source>
</reference>
<feature type="chain" id="PRO_1000095984" description="Phosphoribosylaminoimidazole-succinocarboxamide synthase">
    <location>
        <begin position="1"/>
        <end position="237"/>
    </location>
</feature>
<keyword id="KW-0067">ATP-binding</keyword>
<keyword id="KW-0436">Ligase</keyword>
<keyword id="KW-0547">Nucleotide-binding</keyword>
<keyword id="KW-0658">Purine biosynthesis</keyword>
<keyword id="KW-1185">Reference proteome</keyword>